<sequence>MGRLVVKREDYMATKASAIGHASVKKRIRKMFGNIHEVVDMPNLIEVQRDSYENFLRSRPEDGYVSGLEKTLRSVFPIRDFGGVAELDFVQYELEEPKFDVDECRQRGITYAAPMRVTLRLIVFEVDPDTETRSVLDIKEQDVYMGDMPLMTRNGTFFINGTERVIVSQMHRSPGVLFDHDKGKTHSSGKFLFAARVIPYRGSWLDFEFDAKDIVNVRIDRKRKLPVTTLLYALGLNAEQILHHFYNTITFVRGDGGWKVPYVAESWRGRKPFFDIINGDTGEVVFPAGQKISPRAANKAGRDGLETLLIPTEEIYGHYAAYDVIDESTGRIWIEAGDEVTPENLELLDNAGVATLELLDIDHVSTGPWIRNTLKADKAEDRDHALAEIYRVMRPGEPPTKETAEALFYGLFFDPERYDLSAVGRVKLNMRLDLDCPDTVTTLRAEDILAVVKTLVDLKDGKGEVDDIDNLGNRRVRSVGELLENQYRVGLLRMERAVKERMSSVDVSTVMPNDLINAKPAVAAVREFFGSSQLSQFMDQTNPLSEVTHKRRVSALGPGGLTRERAGFEVRDVHPTHYGRICPIETPEGPNIGLINSLATFSRINKYGFIETPYRKVVDHKVTNEVIYLSAMEESRYTVAQANAELDAEGHFVEELVSAREAGEFLMAPREQITLMDVSPKQLVSVAASLIPFLENDDANRALMGSNMQRQAVSLVRAEAPFVGTGMEETVARDSGAAISARRAGIVDQVDASRIVIRTTGEIEAGKPGVDIYRLMKFQRSNQSTCINQRPLVSVGDYVNAGDVLADGPSTELGELALGRNVLVAFMPWNGYNYEDSILISERIVKDDVFTSIHIDEFEVMARDTKLGPEDITRDIPNVGEDALRNLDEAGIVYIGAEVQPGDILVGKITPKGESPMTPEEKLLRAIFGEKASDVRDTSLRLPPGVAGTIVDVRVFNRHGVDKDERAMAIEREEIERLTKDREDERAILNRATYAQLQEKLLGQTVAAAPYKHIVKGARIDIETLASVEPHKWFKFAVEDDARQAELEAIKNQYDSADEAIRKRFEDRVEKAQRGDELPPGVLKMVKVFVAVKRKLQPGDKMAGRHGNKGVISRILPAEDMPFLADGTPVDIVLNPLGVPSRMNIGQIFETHLGWAARGLGAKVRTALEEWREANADRYEWDFSPPEVVRERMIEVYGEKYAEDIKSREDREIVEMAGLLRNGVPMATPVFDGAKPEDISEMLNLAGLDDSGQVELYDGRTGEQFDRKVTVGYIYMLKLHHLVDDKIHARSIGPYSLVTQQPLGGKAQFGGQRFGEMEVWALQAYGAAYTLQEMLTVKSDDVVGRTKVYEAIVKGDDTFEAGIPESFNVLVKEMHSLGLNVELKTSKAKDEDDSSFQVAAE</sequence>
<dbReference type="EC" id="2.7.7.6" evidence="1"/>
<dbReference type="EMBL" id="AE008692">
    <property type="protein sequence ID" value="AAV89355.1"/>
    <property type="molecule type" value="Genomic_DNA"/>
</dbReference>
<dbReference type="SMR" id="Q5NPK5"/>
<dbReference type="STRING" id="264203.ZMO0731"/>
<dbReference type="KEGG" id="zmo:ZMO0731"/>
<dbReference type="eggNOG" id="COG0085">
    <property type="taxonomic scope" value="Bacteria"/>
</dbReference>
<dbReference type="HOGENOM" id="CLU_000524_4_3_5"/>
<dbReference type="Proteomes" id="UP000001173">
    <property type="component" value="Chromosome"/>
</dbReference>
<dbReference type="GO" id="GO:0000428">
    <property type="term" value="C:DNA-directed RNA polymerase complex"/>
    <property type="evidence" value="ECO:0007669"/>
    <property type="project" value="UniProtKB-KW"/>
</dbReference>
<dbReference type="GO" id="GO:0003677">
    <property type="term" value="F:DNA binding"/>
    <property type="evidence" value="ECO:0007669"/>
    <property type="project" value="UniProtKB-UniRule"/>
</dbReference>
<dbReference type="GO" id="GO:0003899">
    <property type="term" value="F:DNA-directed RNA polymerase activity"/>
    <property type="evidence" value="ECO:0007669"/>
    <property type="project" value="UniProtKB-UniRule"/>
</dbReference>
<dbReference type="GO" id="GO:0032549">
    <property type="term" value="F:ribonucleoside binding"/>
    <property type="evidence" value="ECO:0007669"/>
    <property type="project" value="InterPro"/>
</dbReference>
<dbReference type="GO" id="GO:0006351">
    <property type="term" value="P:DNA-templated transcription"/>
    <property type="evidence" value="ECO:0007669"/>
    <property type="project" value="UniProtKB-UniRule"/>
</dbReference>
<dbReference type="CDD" id="cd00653">
    <property type="entry name" value="RNA_pol_B_RPB2"/>
    <property type="match status" value="1"/>
</dbReference>
<dbReference type="FunFam" id="2.40.50.100:FF:000006">
    <property type="entry name" value="DNA-directed RNA polymerase subunit beta"/>
    <property type="match status" value="1"/>
</dbReference>
<dbReference type="FunFam" id="3.90.1800.10:FF:000001">
    <property type="entry name" value="DNA-directed RNA polymerase subunit beta"/>
    <property type="match status" value="1"/>
</dbReference>
<dbReference type="Gene3D" id="2.40.50.100">
    <property type="match status" value="1"/>
</dbReference>
<dbReference type="Gene3D" id="2.40.50.150">
    <property type="match status" value="1"/>
</dbReference>
<dbReference type="Gene3D" id="3.90.1100.10">
    <property type="match status" value="3"/>
</dbReference>
<dbReference type="Gene3D" id="2.40.270.10">
    <property type="entry name" value="DNA-directed RNA polymerase, subunit 2, domain 6"/>
    <property type="match status" value="1"/>
</dbReference>
<dbReference type="Gene3D" id="3.90.1800.10">
    <property type="entry name" value="RNA polymerase alpha subunit dimerisation domain"/>
    <property type="match status" value="1"/>
</dbReference>
<dbReference type="Gene3D" id="3.90.1110.10">
    <property type="entry name" value="RNA polymerase Rpb2, domain 2"/>
    <property type="match status" value="1"/>
</dbReference>
<dbReference type="HAMAP" id="MF_01321">
    <property type="entry name" value="RNApol_bact_RpoB"/>
    <property type="match status" value="1"/>
</dbReference>
<dbReference type="InterPro" id="IPR019462">
    <property type="entry name" value="DNA-dir_RNA_pol_bsu_external_1"/>
</dbReference>
<dbReference type="InterPro" id="IPR015712">
    <property type="entry name" value="DNA-dir_RNA_pol_su2"/>
</dbReference>
<dbReference type="InterPro" id="IPR007120">
    <property type="entry name" value="DNA-dir_RNAP_su2_dom"/>
</dbReference>
<dbReference type="InterPro" id="IPR037033">
    <property type="entry name" value="DNA-dir_RNAP_su2_hyb_sf"/>
</dbReference>
<dbReference type="InterPro" id="IPR010243">
    <property type="entry name" value="RNA_pol_bsu_bac"/>
</dbReference>
<dbReference type="InterPro" id="IPR007121">
    <property type="entry name" value="RNA_pol_bsu_CS"/>
</dbReference>
<dbReference type="InterPro" id="IPR007644">
    <property type="entry name" value="RNA_pol_bsu_protrusion"/>
</dbReference>
<dbReference type="InterPro" id="IPR007642">
    <property type="entry name" value="RNA_pol_Rpb2_2"/>
</dbReference>
<dbReference type="InterPro" id="IPR037034">
    <property type="entry name" value="RNA_pol_Rpb2_2_sf"/>
</dbReference>
<dbReference type="InterPro" id="IPR007645">
    <property type="entry name" value="RNA_pol_Rpb2_3"/>
</dbReference>
<dbReference type="InterPro" id="IPR007641">
    <property type="entry name" value="RNA_pol_Rpb2_7"/>
</dbReference>
<dbReference type="InterPro" id="IPR014724">
    <property type="entry name" value="RNA_pol_RPB2_OB-fold"/>
</dbReference>
<dbReference type="NCBIfam" id="NF001616">
    <property type="entry name" value="PRK00405.1"/>
    <property type="match status" value="1"/>
</dbReference>
<dbReference type="NCBIfam" id="TIGR02013">
    <property type="entry name" value="rpoB"/>
    <property type="match status" value="1"/>
</dbReference>
<dbReference type="PANTHER" id="PTHR20856">
    <property type="entry name" value="DNA-DIRECTED RNA POLYMERASE I SUBUNIT 2"/>
    <property type="match status" value="1"/>
</dbReference>
<dbReference type="Pfam" id="PF04563">
    <property type="entry name" value="RNA_pol_Rpb2_1"/>
    <property type="match status" value="1"/>
</dbReference>
<dbReference type="Pfam" id="PF04561">
    <property type="entry name" value="RNA_pol_Rpb2_2"/>
    <property type="match status" value="2"/>
</dbReference>
<dbReference type="Pfam" id="PF04565">
    <property type="entry name" value="RNA_pol_Rpb2_3"/>
    <property type="match status" value="1"/>
</dbReference>
<dbReference type="Pfam" id="PF10385">
    <property type="entry name" value="RNA_pol_Rpb2_45"/>
    <property type="match status" value="1"/>
</dbReference>
<dbReference type="Pfam" id="PF00562">
    <property type="entry name" value="RNA_pol_Rpb2_6"/>
    <property type="match status" value="1"/>
</dbReference>
<dbReference type="Pfam" id="PF04560">
    <property type="entry name" value="RNA_pol_Rpb2_7"/>
    <property type="match status" value="1"/>
</dbReference>
<dbReference type="SUPFAM" id="SSF64484">
    <property type="entry name" value="beta and beta-prime subunits of DNA dependent RNA-polymerase"/>
    <property type="match status" value="1"/>
</dbReference>
<dbReference type="PROSITE" id="PS01166">
    <property type="entry name" value="RNA_POL_BETA"/>
    <property type="match status" value="1"/>
</dbReference>
<proteinExistence type="inferred from homology"/>
<name>RPOB_ZYMMO</name>
<reference key="1">
    <citation type="journal article" date="2005" name="Nat. Biotechnol.">
        <title>The genome sequence of the ethanologenic bacterium Zymomonas mobilis ZM4.</title>
        <authorList>
            <person name="Seo J.-S."/>
            <person name="Chong H."/>
            <person name="Park H.S."/>
            <person name="Yoon K.-O."/>
            <person name="Jung C."/>
            <person name="Kim J.J."/>
            <person name="Hong J.H."/>
            <person name="Kim H."/>
            <person name="Kim J.-H."/>
            <person name="Kil J.-I."/>
            <person name="Park C.J."/>
            <person name="Oh H.-M."/>
            <person name="Lee J.-S."/>
            <person name="Jin S.-J."/>
            <person name="Um H.-W."/>
            <person name="Lee H.-J."/>
            <person name="Oh S.-J."/>
            <person name="Kim J.Y."/>
            <person name="Kang H.L."/>
            <person name="Lee S.Y."/>
            <person name="Lee K.J."/>
            <person name="Kang H.S."/>
        </authorList>
    </citation>
    <scope>NUCLEOTIDE SEQUENCE [LARGE SCALE GENOMIC DNA]</scope>
    <source>
        <strain>ATCC 31821 / ZM4 / CP4</strain>
    </source>
</reference>
<organism>
    <name type="scientific">Zymomonas mobilis subsp. mobilis (strain ATCC 31821 / ZM4 / CP4)</name>
    <dbReference type="NCBI Taxonomy" id="264203"/>
    <lineage>
        <taxon>Bacteria</taxon>
        <taxon>Pseudomonadati</taxon>
        <taxon>Pseudomonadota</taxon>
        <taxon>Alphaproteobacteria</taxon>
        <taxon>Sphingomonadales</taxon>
        <taxon>Zymomonadaceae</taxon>
        <taxon>Zymomonas</taxon>
    </lineage>
</organism>
<keyword id="KW-0240">DNA-directed RNA polymerase</keyword>
<keyword id="KW-0548">Nucleotidyltransferase</keyword>
<keyword id="KW-1185">Reference proteome</keyword>
<keyword id="KW-0804">Transcription</keyword>
<keyword id="KW-0808">Transferase</keyword>
<gene>
    <name evidence="1" type="primary">rpoB</name>
    <name type="ordered locus">ZMO0731</name>
</gene>
<evidence type="ECO:0000255" key="1">
    <source>
        <dbReference type="HAMAP-Rule" id="MF_01321"/>
    </source>
</evidence>
<accession>Q5NPK5</accession>
<feature type="chain" id="PRO_0000224124" description="DNA-directed RNA polymerase subunit beta">
    <location>
        <begin position="1"/>
        <end position="1401"/>
    </location>
</feature>
<comment type="function">
    <text evidence="1">DNA-dependent RNA polymerase catalyzes the transcription of DNA into RNA using the four ribonucleoside triphosphates as substrates.</text>
</comment>
<comment type="catalytic activity">
    <reaction evidence="1">
        <text>RNA(n) + a ribonucleoside 5'-triphosphate = RNA(n+1) + diphosphate</text>
        <dbReference type="Rhea" id="RHEA:21248"/>
        <dbReference type="Rhea" id="RHEA-COMP:14527"/>
        <dbReference type="Rhea" id="RHEA-COMP:17342"/>
        <dbReference type="ChEBI" id="CHEBI:33019"/>
        <dbReference type="ChEBI" id="CHEBI:61557"/>
        <dbReference type="ChEBI" id="CHEBI:140395"/>
        <dbReference type="EC" id="2.7.7.6"/>
    </reaction>
</comment>
<comment type="subunit">
    <text evidence="1">The RNAP catalytic core consists of 2 alpha, 1 beta, 1 beta' and 1 omega subunit. When a sigma factor is associated with the core the holoenzyme is formed, which can initiate transcription.</text>
</comment>
<comment type="similarity">
    <text evidence="1">Belongs to the RNA polymerase beta chain family.</text>
</comment>
<protein>
    <recommendedName>
        <fullName evidence="1">DNA-directed RNA polymerase subunit beta</fullName>
        <shortName evidence="1">RNAP subunit beta</shortName>
        <ecNumber evidence="1">2.7.7.6</ecNumber>
    </recommendedName>
    <alternativeName>
        <fullName evidence="1">RNA polymerase subunit beta</fullName>
    </alternativeName>
    <alternativeName>
        <fullName evidence="1">Transcriptase subunit beta</fullName>
    </alternativeName>
</protein>